<sequence>MLSTLKRFGITTGATAAASAKASVIYLFRNETPKSVTIPTPIGLRLEIPVDDYERRGEEYCATVTKFSGDNPDVLNGLKIVSCSTKCDSGIFIEGGNGIGVVTKPGLKVEVGEKAINPIARQMIIDAINEVTTDGVKVRIEVPDGEKIAELTMNKDVGVINGISILGTTGIEYPISDDEYLEHIKSEICVVKALGKKKLILAPGNTSFEFARKRYGDNVVKIGDRVGDSIRLAIEQGFTHIVLVSLPGKITKVASGLMNTHSKYGDARIETLTHAAVLAKLDIEKINKIANSATVTEAITYLLPEERKTLFSIVAKRVLQRLRKIVKNDVKLGVVIISEEGEVLAEEGEL</sequence>
<accession>Q96ZL3</accession>
<accession>F9VNN0</accession>
<organism>
    <name type="scientific">Sulfurisphaera tokodaii (strain DSM 16993 / JCM 10545 / NBRC 100140 / 7)</name>
    <name type="common">Sulfolobus tokodaii</name>
    <dbReference type="NCBI Taxonomy" id="273063"/>
    <lineage>
        <taxon>Archaea</taxon>
        <taxon>Thermoproteota</taxon>
        <taxon>Thermoprotei</taxon>
        <taxon>Sulfolobales</taxon>
        <taxon>Sulfolobaceae</taxon>
        <taxon>Sulfurisphaera</taxon>
    </lineage>
</organism>
<name>CBID_SULTO</name>
<reference key="1">
    <citation type="journal article" date="2001" name="DNA Res.">
        <title>Complete genome sequence of an aerobic thermoacidophilic Crenarchaeon, Sulfolobus tokodaii strain7.</title>
        <authorList>
            <person name="Kawarabayasi Y."/>
            <person name="Hino Y."/>
            <person name="Horikawa H."/>
            <person name="Jin-no K."/>
            <person name="Takahashi M."/>
            <person name="Sekine M."/>
            <person name="Baba S."/>
            <person name="Ankai A."/>
            <person name="Kosugi H."/>
            <person name="Hosoyama A."/>
            <person name="Fukui S."/>
            <person name="Nagai Y."/>
            <person name="Nishijima K."/>
            <person name="Otsuka R."/>
            <person name="Nakazawa H."/>
            <person name="Takamiya M."/>
            <person name="Kato Y."/>
            <person name="Yoshizawa T."/>
            <person name="Tanaka T."/>
            <person name="Kudoh Y."/>
            <person name="Yamazaki J."/>
            <person name="Kushida N."/>
            <person name="Oguchi A."/>
            <person name="Aoki K."/>
            <person name="Masuda S."/>
            <person name="Yanagii M."/>
            <person name="Nishimura M."/>
            <person name="Yamagishi A."/>
            <person name="Oshima T."/>
            <person name="Kikuchi H."/>
        </authorList>
    </citation>
    <scope>NUCLEOTIDE SEQUENCE [LARGE SCALE GENOMIC DNA]</scope>
    <source>
        <strain>DSM 16993 / JCM 10545 / NBRC 100140 / 7</strain>
    </source>
</reference>
<feature type="chain" id="PRO_0000141700" description="Cobalt-precorrin-5B C(1)-methyltransferase">
    <location>
        <begin position="1"/>
        <end position="350"/>
    </location>
</feature>
<comment type="function">
    <text evidence="1">Catalyzes the methylation of C-1 in cobalt-precorrin-5B to form cobalt-precorrin-6A.</text>
</comment>
<comment type="catalytic activity">
    <reaction evidence="1">
        <text>Co-precorrin-5B + S-adenosyl-L-methionine = Co-precorrin-6A + S-adenosyl-L-homocysteine</text>
        <dbReference type="Rhea" id="RHEA:26285"/>
        <dbReference type="ChEBI" id="CHEBI:57856"/>
        <dbReference type="ChEBI" id="CHEBI:59789"/>
        <dbReference type="ChEBI" id="CHEBI:60063"/>
        <dbReference type="ChEBI" id="CHEBI:60064"/>
        <dbReference type="EC" id="2.1.1.195"/>
    </reaction>
</comment>
<comment type="pathway">
    <text evidence="1">Cofactor biosynthesis; adenosylcobalamin biosynthesis; cob(II)yrinate a,c-diamide from sirohydrochlorin (anaerobic route): step 6/10.</text>
</comment>
<comment type="similarity">
    <text evidence="1">Belongs to the CbiD family.</text>
</comment>
<keyword id="KW-0169">Cobalamin biosynthesis</keyword>
<keyword id="KW-0489">Methyltransferase</keyword>
<keyword id="KW-1185">Reference proteome</keyword>
<keyword id="KW-0949">S-adenosyl-L-methionine</keyword>
<keyword id="KW-0808">Transferase</keyword>
<gene>
    <name evidence="1" type="primary">cbiD</name>
    <name type="ordered locus">STK_18210</name>
</gene>
<evidence type="ECO:0000255" key="1">
    <source>
        <dbReference type="HAMAP-Rule" id="MF_00787"/>
    </source>
</evidence>
<proteinExistence type="inferred from homology"/>
<dbReference type="EC" id="2.1.1.195" evidence="1"/>
<dbReference type="EMBL" id="BA000023">
    <property type="protein sequence ID" value="BAK54676.1"/>
    <property type="molecule type" value="Genomic_DNA"/>
</dbReference>
<dbReference type="SMR" id="Q96ZL3"/>
<dbReference type="STRING" id="273063.STK_18210"/>
<dbReference type="KEGG" id="sto:STK_18210"/>
<dbReference type="PATRIC" id="fig|273063.9.peg.2076"/>
<dbReference type="eggNOG" id="arCOG04383">
    <property type="taxonomic scope" value="Archaea"/>
</dbReference>
<dbReference type="OrthoDB" id="10423at2157"/>
<dbReference type="UniPathway" id="UPA00148">
    <property type="reaction ID" value="UER00227"/>
</dbReference>
<dbReference type="Proteomes" id="UP000001015">
    <property type="component" value="Chromosome"/>
</dbReference>
<dbReference type="GO" id="GO:0043780">
    <property type="term" value="F:cobalt-precorrin-5B C1-methyltransferase activity"/>
    <property type="evidence" value="ECO:0007669"/>
    <property type="project" value="RHEA"/>
</dbReference>
<dbReference type="GO" id="GO:0019251">
    <property type="term" value="P:anaerobic cobalamin biosynthetic process"/>
    <property type="evidence" value="ECO:0007669"/>
    <property type="project" value="UniProtKB-UniRule"/>
</dbReference>
<dbReference type="GO" id="GO:0032259">
    <property type="term" value="P:methylation"/>
    <property type="evidence" value="ECO:0007669"/>
    <property type="project" value="UniProtKB-KW"/>
</dbReference>
<dbReference type="Gene3D" id="3.30.2110.10">
    <property type="entry name" value="CbiD-like"/>
    <property type="match status" value="1"/>
</dbReference>
<dbReference type="HAMAP" id="MF_00787">
    <property type="entry name" value="CbiD"/>
    <property type="match status" value="1"/>
</dbReference>
<dbReference type="InterPro" id="IPR002748">
    <property type="entry name" value="CbiD"/>
</dbReference>
<dbReference type="InterPro" id="IPR036074">
    <property type="entry name" value="CbiD_sf"/>
</dbReference>
<dbReference type="NCBIfam" id="TIGR00312">
    <property type="entry name" value="cbiD"/>
    <property type="match status" value="1"/>
</dbReference>
<dbReference type="PANTHER" id="PTHR35863">
    <property type="entry name" value="COBALT-PRECORRIN-5B C(1)-METHYLTRANSFERASE"/>
    <property type="match status" value="1"/>
</dbReference>
<dbReference type="PANTHER" id="PTHR35863:SF1">
    <property type="entry name" value="COBALT-PRECORRIN-5B C(1)-METHYLTRANSFERASE"/>
    <property type="match status" value="1"/>
</dbReference>
<dbReference type="Pfam" id="PF01888">
    <property type="entry name" value="CbiD"/>
    <property type="match status" value="1"/>
</dbReference>
<dbReference type="PIRSF" id="PIRSF026782">
    <property type="entry name" value="CbiD"/>
    <property type="match status" value="1"/>
</dbReference>
<dbReference type="SUPFAM" id="SSF111342">
    <property type="entry name" value="CbiD-like"/>
    <property type="match status" value="1"/>
</dbReference>
<protein>
    <recommendedName>
        <fullName evidence="1">Cobalt-precorrin-5B C(1)-methyltransferase</fullName>
        <ecNumber evidence="1">2.1.1.195</ecNumber>
    </recommendedName>
    <alternativeName>
        <fullName evidence="1">Cobalt-precorrin-6A synthase</fullName>
    </alternativeName>
</protein>